<keyword id="KW-0002">3D-structure</keyword>
<keyword id="KW-0025">Alternative splicing</keyword>
<keyword id="KW-0158">Chromosome</keyword>
<keyword id="KW-0172">Cockayne syndrome</keyword>
<keyword id="KW-0209">Deafness</keyword>
<keyword id="KW-0225">Disease variant</keyword>
<keyword id="KW-0227">DNA damage</keyword>
<keyword id="KW-0234">DNA repair</keyword>
<keyword id="KW-0242">Dwarfism</keyword>
<keyword id="KW-0539">Nucleus</keyword>
<keyword id="KW-0597">Phosphoprotein</keyword>
<keyword id="KW-1267">Proteomics identification</keyword>
<keyword id="KW-1185">Reference proteome</keyword>
<keyword id="KW-0677">Repeat</keyword>
<keyword id="KW-0833">Ubl conjugation pathway</keyword>
<keyword id="KW-0853">WD repeat</keyword>
<gene>
    <name evidence="24 28" type="primary">ERCC8</name>
    <name evidence="22" type="synonym">CKN1</name>
    <name evidence="25" type="synonym">CSA</name>
</gene>
<sequence length="396" mass="44055">MLGFLSARQTGLEDPLRLRRAESTRRVLGLELNKDRDVERIHGGGINTLDIEPVEGRYMLSGGSDGVIVLYDLENSSRQSYYTCKAVCSIGRDHPDVHRYSVETVQWYPHDTGMFTSSSFDKTLKVWDTNTLQTADVFNFEETVYSHHMSPVSTKHCLVAVGTRGPKVQLCDLKSGSCSHILQGHRQEILAVSWSPRYDYILATASADSRVKLWDVRRASGCLITLDQHNGKKSQAVESANTAHNGKVNGLCFTSDGLHLLTVGTDNRMRLWNSSNGENTLVNYGKVCNNSKKGLKFTVSCGCSSEFVFVPYGSTIAVYTVYSGEQITMLKGHYKTVDCCVFQSNFQELYSGSRDCNILAWVPSLYEPVPDDDETTTKSQLNPAFEDAWSSSDEEG</sequence>
<protein>
    <recommendedName>
        <fullName evidence="26">DNA excision repair protein ERCC-8</fullName>
    </recommendedName>
    <alternativeName>
        <fullName evidence="25">Cockayne syndrome WD repeat protein CSA</fullName>
    </alternativeName>
</protein>
<comment type="function">
    <text evidence="2 5 6 13 14 15 16 17 18 19">Substrate-recognition component of the CSA complex, a DCX (DDB1-CUL4-X-box) E3 ubiquitin-protein ligase complex, involved in transcription-coupled nucleotide excision repair (TC-NER), a process during which RNA polymerase II-blocking lesions are rapidly removed from the transcribed strand of active genes (PubMed:12732143, PubMed:16751180, PubMed:16964240, PubMed:32142649, PubMed:34526721, PubMed:38316879, PubMed:38600235, PubMed:38600236). Following recruitment to lesion-stalled RNA polymerase II (Pol II), the CSA complex mediates ubiquitination of Pol II subunit POLR2A/RPB1 at 'Lys-1268', a critical TC-NER checkpoint, governing RNA Pol II stability and initiating DNA damage excision by TFIIH recruitment (PubMed:12732143, PubMed:16751180, PubMed:16964240, PubMed:32142649, PubMed:32355176, PubMed:34526721, PubMed:38316879, PubMed:38600235, PubMed:38600236). The CSA complex also promotes the ubiquitination and subsequent proteasomal degradation of ERCC6/CSB in a UV-dependent manner; ERCC6 degradation is essential for the recovery of RNA synthesis after transcription-coupled repair (PubMed:16751180). Also plays a role in DNA double-strand breaks (DSSBs) repair by non-homologous end joining (NHEJ) (PubMed:29545921).</text>
</comment>
<comment type="pathway">
    <text evidence="2 5 16">Protein modification; protein ubiquitination.</text>
</comment>
<comment type="subunit">
    <text evidence="2 5 10 11 15 16 17 20">Part of the CSA complex (also named DCX(ERCC8) complex), a DCX E3 ubiquitin-protein ligase complex containing ERCC8, RBX1, DDB1 and CUL4A; the CSA complex interacts with RNA polymerase II; upon UV irradiation it interacts with the COP9 signalosome and preferentially with the hyperphosphorylated form of RNA polymerase II (PubMed:12732143, PubMed:22118460, PubMed:32355176, PubMed:34526721, PubMed:38316879). Interacts with ERCC6/CSB (via CIM motif); promoting recruitment to lesion-stalled RNA polymerase II (Pol II) (PubMed:16751180, PubMed:32355176, PubMed:7664335). Interacts with KIAA1530/UVSSA (PubMed:22466612). Interacts with a subunit of RNA polymerase II TFIIH (PubMed:7664335).</text>
</comment>
<comment type="interaction">
    <interactant intactId="EBI-295260">
        <id>Q13216</id>
    </interactant>
    <interactant intactId="EBI-295232">
        <id>Q9HCS7</id>
        <label>XAB2</label>
    </interactant>
    <organismsDiffer>false</organismsDiffer>
    <experiments>3</experiments>
</comment>
<comment type="interaction">
    <interactant intactId="EBI-596556">
        <id>Q13216-1</id>
    </interactant>
    <interactant intactId="EBI-295284">
        <id>Q03468</id>
        <label>ERCC6</label>
    </interactant>
    <organismsDiffer>false</organismsDiffer>
    <experiments>2</experiments>
</comment>
<comment type="interaction">
    <interactant intactId="EBI-16466949">
        <id>Q13216-2</id>
    </interactant>
    <interactant intactId="EBI-930964">
        <id>P54253</id>
        <label>ATXN1</label>
    </interactant>
    <organismsDiffer>false</organismsDiffer>
    <experiments>3</experiments>
</comment>
<comment type="interaction">
    <interactant intactId="EBI-16466949">
        <id>Q13216-2</id>
    </interactant>
    <interactant intactId="EBI-350590">
        <id>Q9UNS2</id>
        <label>COPS3</label>
    </interactant>
    <organismsDiffer>false</organismsDiffer>
    <experiments>3</experiments>
</comment>
<comment type="interaction">
    <interactant intactId="EBI-16466949">
        <id>Q13216-2</id>
    </interactant>
    <interactant intactId="EBI-744302">
        <id>P14136</id>
        <label>GFAP</label>
    </interactant>
    <organismsDiffer>false</organismsDiffer>
    <experiments>3</experiments>
</comment>
<comment type="interaction">
    <interactant intactId="EBI-16466949">
        <id>Q13216-2</id>
    </interactant>
    <interactant intactId="EBI-517086">
        <id>O43464</id>
        <label>HTRA2</label>
    </interactant>
    <organismsDiffer>false</organismsDiffer>
    <experiments>3</experiments>
</comment>
<comment type="interaction">
    <interactant intactId="EBI-16466949">
        <id>Q13216-2</id>
    </interactant>
    <interactant intactId="EBI-1055254">
        <id>Q8WXH2</id>
        <label>JPH3</label>
    </interactant>
    <organismsDiffer>false</organismsDiffer>
    <experiments>3</experiments>
</comment>
<comment type="interaction">
    <interactant intactId="EBI-16466949">
        <id>Q13216-2</id>
    </interactant>
    <interactant intactId="EBI-10975473">
        <id>O60333-2</id>
        <label>KIF1B</label>
    </interactant>
    <organismsDiffer>false</organismsDiffer>
    <experiments>3</experiments>
</comment>
<comment type="interaction">
    <interactant intactId="EBI-16466949">
        <id>Q13216-2</id>
    </interactant>
    <interactant intactId="EBI-7108375">
        <id>O15069</id>
        <label>NACAD</label>
    </interactant>
    <organismsDiffer>false</organismsDiffer>
    <experiments>3</experiments>
</comment>
<comment type="interaction">
    <interactant intactId="EBI-16466949">
        <id>Q13216-2</id>
    </interactant>
    <interactant intactId="EBI-629434">
        <id>O75925</id>
        <label>PIAS1</label>
    </interactant>
    <organismsDiffer>false</organismsDiffer>
    <experiments>3</experiments>
</comment>
<comment type="interaction">
    <interactant intactId="EBI-16466949">
        <id>Q13216-2</id>
    </interactant>
    <interactant intactId="EBI-50433196">
        <id>A0A6Q8PF08</id>
        <label>PMP22</label>
    </interactant>
    <organismsDiffer>false</organismsDiffer>
    <experiments>3</experiments>
</comment>
<comment type="interaction">
    <interactant intactId="EBI-16466949">
        <id>Q13216-2</id>
    </interactant>
    <interactant intactId="EBI-749195">
        <id>P60891</id>
        <label>PRPS1</label>
    </interactant>
    <organismsDiffer>false</organismsDiffer>
    <experiments>3</experiments>
</comment>
<comment type="interaction">
    <interactant intactId="EBI-16466949">
        <id>Q13216-2</id>
    </interactant>
    <interactant intactId="EBI-743938">
        <id>Q96D59</id>
        <label>RNF183</label>
    </interactant>
    <organismsDiffer>false</organismsDiffer>
    <experiments>3</experiments>
</comment>
<comment type="interaction">
    <interactant intactId="EBI-16466949">
        <id>Q13216-2</id>
    </interactant>
    <interactant intactId="EBI-358545">
        <id>Q9GZS3</id>
        <label>SKIC8</label>
    </interactant>
    <organismsDiffer>false</organismsDiffer>
    <experiments>3</experiments>
</comment>
<comment type="subcellular location">
    <subcellularLocation>
        <location evidence="12 15">Nucleus</location>
    </subcellularLocation>
    <subcellularLocation>
        <location evidence="15">Chromosome</location>
    </subcellularLocation>
    <subcellularLocation>
        <location evidence="12">Nucleus matrix</location>
    </subcellularLocation>
    <text evidence="12 15">Recruited to lesion-stalled RNA polymerase II (Pol II) sites by ERCC6/CSB (PubMed:32355176). UV-induced translocation to the nuclear matrix is dependent on ERCC6/CSB (PubMed:26620705).</text>
</comment>
<comment type="alternative products">
    <event type="alternative splicing"/>
    <isoform>
        <id>Q13216-1</id>
        <name>1</name>
        <sequence type="displayed"/>
    </isoform>
    <isoform>
        <id>Q13216-2</id>
        <name>2</name>
        <sequence type="described" ref="VSP_013914 VSP_013915"/>
    </isoform>
</comment>
<comment type="disease" evidence="3 4 8 9">
    <disease id="DI-00311">
        <name>Cockayne syndrome A</name>
        <acronym>CSA</acronym>
        <description>A rare disorder characterized by cutaneous sensitivity to sunlight, abnormal and slow growth, cachectic dwarfism, progeroid appearance, progressive pigmentary retinopathy and sensorineural deafness. There is delayed neural development and severe progressive neurologic degeneration resulting in intellectual disability. Two clinical forms are recognized: in the classical form or Cockayne syndrome type 1, the symptoms are progressive and typically become apparent within the first few years or life; the less common Cockayne syndrome type 2 is characterized by more severe symptoms that manifest prenatally. Cockayne syndrome shows some overlap with certain forms of xeroderma pigmentosum. Unlike xeroderma pigmentosum, patients with Cockayne syndrome do not manifest increased freckling and other pigmentation abnormalities in the skin and have no significant increase in skin cancer.</description>
        <dbReference type="MIM" id="216400"/>
    </disease>
    <text>The disease is caused by variants affecting the gene represented in this entry.</text>
</comment>
<comment type="disease" evidence="7">
    <disease id="DI-03443">
        <name>UV-sensitive syndrome 2</name>
        <acronym>UVSS2</acronym>
        <description>An autosomal recessive disorder characterized by cutaneous photosensitivity and mild freckling in the absence of neurological abnormalities or skin tumors.</description>
        <dbReference type="MIM" id="614621"/>
    </disease>
    <text>The disease is caused by variants affecting the gene represented in this entry.</text>
</comment>
<comment type="caution">
    <text evidence="27">PubMed:16916636 was retracted due to image manipulations.</text>
</comment>
<comment type="online information" name="Atlas of Genetics and Cytogenetics in Oncology and Haematology">
    <link uri="https://atlasgeneticsoncology.org/gene/301/CSA"/>
</comment>
<comment type="online information" name="Mendelian genes excision repair cross-complementing rodent repair deficiency, complementation group 8 (ERCC8)">
    <link uri="https://databases.lovd.nl/shared/genes/ERCC8"/>
    <text>Leiden Open Variation Database (LOVD)</text>
</comment>
<reference key="1">
    <citation type="journal article" date="1995" name="Cell">
        <title>The Cockayne syndrome group A gene encodes a WD repeat protein that interacts with CSB protein and a subunit of RNA polymerase II TFIIH.</title>
        <authorList>
            <person name="Henning K.A."/>
            <person name="Li L."/>
            <person name="Iyer N."/>
            <person name="McDaniel L.D."/>
            <person name="Reagan M.S."/>
            <person name="Legerski R."/>
            <person name="Schultz R.A."/>
            <person name="Stefanini M."/>
            <person name="Lehmann A.R."/>
            <person name="Mayne L.V."/>
            <person name="Friedberg E.C."/>
        </authorList>
    </citation>
    <scope>NUCLEOTIDE SEQUENCE [MRNA] (ISOFORM 1)</scope>
    <scope>INTERACTION WITH ERCC6</scope>
</reference>
<reference key="2">
    <citation type="submission" date="2004-06" db="EMBL/GenBank/DDBJ databases">
        <title>Cloning of human full open reading frames in Gateway(TM) system entry vector (pDONR201).</title>
        <authorList>
            <person name="Halleck A."/>
            <person name="Ebert L."/>
            <person name="Mkoundinya M."/>
            <person name="Schick M."/>
            <person name="Eisenstein S."/>
            <person name="Neubert P."/>
            <person name="Kstrang K."/>
            <person name="Schatten R."/>
            <person name="Shen B."/>
            <person name="Henze S."/>
            <person name="Mar W."/>
            <person name="Korn B."/>
            <person name="Zuo D."/>
            <person name="Hu Y."/>
            <person name="LaBaer J."/>
        </authorList>
    </citation>
    <scope>NUCLEOTIDE SEQUENCE [LARGE SCALE MRNA] (ISOFORM 1)</scope>
</reference>
<reference key="3">
    <citation type="submission" date="2004-10" db="EMBL/GenBank/DDBJ databases">
        <title>Cloning of human full-length CDSs in BD Creator(TM) system donor vector.</title>
        <authorList>
            <person name="Kalnine N."/>
            <person name="Chen X."/>
            <person name="Rolfs A."/>
            <person name="Halleck A."/>
            <person name="Hines L."/>
            <person name="Eisenstein S."/>
            <person name="Koundinya M."/>
            <person name="Raphael J."/>
            <person name="Moreira D."/>
            <person name="Kelley T."/>
            <person name="LaBaer J."/>
            <person name="Lin Y."/>
            <person name="Phelan M."/>
            <person name="Farmer A."/>
        </authorList>
    </citation>
    <scope>NUCLEOTIDE SEQUENCE [LARGE SCALE MRNA] (ISOFORM 1)</scope>
</reference>
<reference key="4">
    <citation type="submission" date="2003-01" db="EMBL/GenBank/DDBJ databases">
        <authorList>
            <consortium name="NIEHS SNPs program"/>
        </authorList>
    </citation>
    <scope>NUCLEOTIDE SEQUENCE [GENOMIC DNA]</scope>
    <scope>VARIANT CYS-200</scope>
</reference>
<reference key="5">
    <citation type="journal article" date="2004" name="Nat. Genet.">
        <title>Complete sequencing and characterization of 21,243 full-length human cDNAs.</title>
        <authorList>
            <person name="Ota T."/>
            <person name="Suzuki Y."/>
            <person name="Nishikawa T."/>
            <person name="Otsuki T."/>
            <person name="Sugiyama T."/>
            <person name="Irie R."/>
            <person name="Wakamatsu A."/>
            <person name="Hayashi K."/>
            <person name="Sato H."/>
            <person name="Nagai K."/>
            <person name="Kimura K."/>
            <person name="Makita H."/>
            <person name="Sekine M."/>
            <person name="Obayashi M."/>
            <person name="Nishi T."/>
            <person name="Shibahara T."/>
            <person name="Tanaka T."/>
            <person name="Ishii S."/>
            <person name="Yamamoto J."/>
            <person name="Saito K."/>
            <person name="Kawai Y."/>
            <person name="Isono Y."/>
            <person name="Nakamura Y."/>
            <person name="Nagahari K."/>
            <person name="Murakami K."/>
            <person name="Yasuda T."/>
            <person name="Iwayanagi T."/>
            <person name="Wagatsuma M."/>
            <person name="Shiratori A."/>
            <person name="Sudo H."/>
            <person name="Hosoiri T."/>
            <person name="Kaku Y."/>
            <person name="Kodaira H."/>
            <person name="Kondo H."/>
            <person name="Sugawara M."/>
            <person name="Takahashi M."/>
            <person name="Kanda K."/>
            <person name="Yokoi T."/>
            <person name="Furuya T."/>
            <person name="Kikkawa E."/>
            <person name="Omura Y."/>
            <person name="Abe K."/>
            <person name="Kamihara K."/>
            <person name="Katsuta N."/>
            <person name="Sato K."/>
            <person name="Tanikawa M."/>
            <person name="Yamazaki M."/>
            <person name="Ninomiya K."/>
            <person name="Ishibashi T."/>
            <person name="Yamashita H."/>
            <person name="Murakawa K."/>
            <person name="Fujimori K."/>
            <person name="Tanai H."/>
            <person name="Kimata M."/>
            <person name="Watanabe M."/>
            <person name="Hiraoka S."/>
            <person name="Chiba Y."/>
            <person name="Ishida S."/>
            <person name="Ono Y."/>
            <person name="Takiguchi S."/>
            <person name="Watanabe S."/>
            <person name="Yosida M."/>
            <person name="Hotuta T."/>
            <person name="Kusano J."/>
            <person name="Kanehori K."/>
            <person name="Takahashi-Fujii A."/>
            <person name="Hara H."/>
            <person name="Tanase T.-O."/>
            <person name="Nomura Y."/>
            <person name="Togiya S."/>
            <person name="Komai F."/>
            <person name="Hara R."/>
            <person name="Takeuchi K."/>
            <person name="Arita M."/>
            <person name="Imose N."/>
            <person name="Musashino K."/>
            <person name="Yuuki H."/>
            <person name="Oshima A."/>
            <person name="Sasaki N."/>
            <person name="Aotsuka S."/>
            <person name="Yoshikawa Y."/>
            <person name="Matsunawa H."/>
            <person name="Ichihara T."/>
            <person name="Shiohata N."/>
            <person name="Sano S."/>
            <person name="Moriya S."/>
            <person name="Momiyama H."/>
            <person name="Satoh N."/>
            <person name="Takami S."/>
            <person name="Terashima Y."/>
            <person name="Suzuki O."/>
            <person name="Nakagawa S."/>
            <person name="Senoh A."/>
            <person name="Mizoguchi H."/>
            <person name="Goto Y."/>
            <person name="Shimizu F."/>
            <person name="Wakebe H."/>
            <person name="Hishigaki H."/>
            <person name="Watanabe T."/>
            <person name="Sugiyama A."/>
            <person name="Takemoto M."/>
            <person name="Kawakami B."/>
            <person name="Yamazaki M."/>
            <person name="Watanabe K."/>
            <person name="Kumagai A."/>
            <person name="Itakura S."/>
            <person name="Fukuzumi Y."/>
            <person name="Fujimori Y."/>
            <person name="Komiyama M."/>
            <person name="Tashiro H."/>
            <person name="Tanigami A."/>
            <person name="Fujiwara T."/>
            <person name="Ono T."/>
            <person name="Yamada K."/>
            <person name="Fujii Y."/>
            <person name="Ozaki K."/>
            <person name="Hirao M."/>
            <person name="Ohmori Y."/>
            <person name="Kawabata A."/>
            <person name="Hikiji T."/>
            <person name="Kobatake N."/>
            <person name="Inagaki H."/>
            <person name="Ikema Y."/>
            <person name="Okamoto S."/>
            <person name="Okitani R."/>
            <person name="Kawakami T."/>
            <person name="Noguchi S."/>
            <person name="Itoh T."/>
            <person name="Shigeta K."/>
            <person name="Senba T."/>
            <person name="Matsumura K."/>
            <person name="Nakajima Y."/>
            <person name="Mizuno T."/>
            <person name="Morinaga M."/>
            <person name="Sasaki M."/>
            <person name="Togashi T."/>
            <person name="Oyama M."/>
            <person name="Hata H."/>
            <person name="Watanabe M."/>
            <person name="Komatsu T."/>
            <person name="Mizushima-Sugano J."/>
            <person name="Satoh T."/>
            <person name="Shirai Y."/>
            <person name="Takahashi Y."/>
            <person name="Nakagawa K."/>
            <person name="Okumura K."/>
            <person name="Nagase T."/>
            <person name="Nomura N."/>
            <person name="Kikuchi H."/>
            <person name="Masuho Y."/>
            <person name="Yamashita R."/>
            <person name="Nakai K."/>
            <person name="Yada T."/>
            <person name="Nakamura Y."/>
            <person name="Ohara O."/>
            <person name="Isogai T."/>
            <person name="Sugano S."/>
        </authorList>
    </citation>
    <scope>NUCLEOTIDE SEQUENCE [LARGE SCALE MRNA] (ISOFORM 1)</scope>
    <source>
        <tissue>Uterus</tissue>
    </source>
</reference>
<reference key="6">
    <citation type="submission" date="2005-07" db="EMBL/GenBank/DDBJ databases">
        <authorList>
            <person name="Mural R.J."/>
            <person name="Istrail S."/>
            <person name="Sutton G.G."/>
            <person name="Florea L."/>
            <person name="Halpern A.L."/>
            <person name="Mobarry C.M."/>
            <person name="Lippert R."/>
            <person name="Walenz B."/>
            <person name="Shatkay H."/>
            <person name="Dew I."/>
            <person name="Miller J.R."/>
            <person name="Flanigan M.J."/>
            <person name="Edwards N.J."/>
            <person name="Bolanos R."/>
            <person name="Fasulo D."/>
            <person name="Halldorsson B.V."/>
            <person name="Hannenhalli S."/>
            <person name="Turner R."/>
            <person name="Yooseph S."/>
            <person name="Lu F."/>
            <person name="Nusskern D.R."/>
            <person name="Shue B.C."/>
            <person name="Zheng X.H."/>
            <person name="Zhong F."/>
            <person name="Delcher A.L."/>
            <person name="Huson D.H."/>
            <person name="Kravitz S.A."/>
            <person name="Mouchard L."/>
            <person name="Reinert K."/>
            <person name="Remington K.A."/>
            <person name="Clark A.G."/>
            <person name="Waterman M.S."/>
            <person name="Eichler E.E."/>
            <person name="Adams M.D."/>
            <person name="Hunkapiller M.W."/>
            <person name="Myers E.W."/>
            <person name="Venter J.C."/>
        </authorList>
    </citation>
    <scope>NUCLEOTIDE SEQUENCE [LARGE SCALE GENOMIC DNA]</scope>
</reference>
<reference key="7">
    <citation type="journal article" date="2004" name="Genome Res.">
        <title>The status, quality, and expansion of the NIH full-length cDNA project: the Mammalian Gene Collection (MGC).</title>
        <authorList>
            <consortium name="The MGC Project Team"/>
        </authorList>
    </citation>
    <scope>NUCLEOTIDE SEQUENCE [LARGE SCALE MRNA] (ISOFORM 2)</scope>
    <source>
        <tissue>Urinary bladder</tissue>
    </source>
</reference>
<reference key="8">
    <citation type="journal article" date="2003" name="Cell">
        <title>The ubiquitin ligase activity in the DDB2 and CSA complexes is differentially regulated by the COP9 signalosome in response to DNA damage.</title>
        <authorList>
            <person name="Groisman R."/>
            <person name="Polanowska J."/>
            <person name="Kuraoka I."/>
            <person name="Sawada J."/>
            <person name="Saijo M."/>
            <person name="Drapkin R."/>
            <person name="Kisselev A.F."/>
            <person name="Tanaka K."/>
            <person name="Nakatani Y."/>
        </authorList>
    </citation>
    <scope>FUNCTION</scope>
    <scope>INTERACTION WITH DDB1</scope>
    <scope>IDENTIFICATION IN THE CSA COMPLEX WITH RBX1; DDB1 AND CUL4A</scope>
    <scope>INTERACTION OF THE CSA COMPLEX WITH RNA POLYMERASE II AND THE COP9 SIGNALOSOME</scope>
</reference>
<reference key="9">
    <citation type="journal article" date="2006" name="Genes Dev.">
        <title>CSA-dependent degradation of CSB by the ubiquitin-proteasome pathway establishes a link between complementation factors of the Cockayne syndrome.</title>
        <authorList>
            <person name="Groisman R."/>
            <person name="Kuraoka I."/>
            <person name="Chevallier O."/>
            <person name="Gaye N."/>
            <person name="Magnaldo T."/>
            <person name="Tanaka K."/>
            <person name="Kisselev A.F."/>
            <person name="Harel-Bellan A."/>
            <person name="Nakatani Y."/>
        </authorList>
    </citation>
    <scope>INTERACTION WITH ERCC6</scope>
    <scope>FUNCTION AS SUBSTRATE-RECOGNITION COMPONENT OF THE CSA COMPLEX</scope>
</reference>
<reference key="10">
    <citation type="journal article" date="2006" name="Mol. Cell">
        <title>Cockayne syndrome A and B proteins differentially regulate recruitment of chromatin remodeling and repair factors to stalled RNA polymerase II in vivo.</title>
        <authorList>
            <person name="Fousteri M."/>
            <person name="Vermeulen W."/>
            <person name="van Zeeland A.A."/>
            <person name="Mullenders L.H."/>
        </authorList>
    </citation>
    <scope>RETRACTED PAPER</scope>
</reference>
<reference key="11">
    <citation type="journal article" date="2021" name="Mol. Cell">
        <authorList>
            <person name="Fousteri M."/>
            <person name="Vermeulen W."/>
            <person name="van Zeeland A.A."/>
            <person name="Mullenders L.H.F."/>
        </authorList>
    </citation>
    <scope>RETRACTION NOTICE OF PUBMED:16916636</scope>
</reference>
<reference key="12">
    <citation type="journal article" date="2006" name="Nature">
        <title>Molecular architecture and assembly of the DDB1-CUL4A ubiquitin ligase machinery.</title>
        <authorList>
            <person name="Angers S."/>
            <person name="Li T."/>
            <person name="Yi X."/>
            <person name="MacCoss M.J."/>
            <person name="Moon R.T."/>
            <person name="Zheng N."/>
        </authorList>
    </citation>
    <scope>FUNCTION</scope>
</reference>
<reference key="13">
    <citation type="journal article" date="2011" name="Sci. Signal.">
        <title>System-wide temporal characterization of the proteome and phosphoproteome of human embryonic stem cell differentiation.</title>
        <authorList>
            <person name="Rigbolt K.T."/>
            <person name="Prokhorova T.A."/>
            <person name="Akimov V."/>
            <person name="Henningsen J."/>
            <person name="Johansen P.T."/>
            <person name="Kratchmarova I."/>
            <person name="Kassem M."/>
            <person name="Mann M."/>
            <person name="Olsen J.V."/>
            <person name="Blagoev B."/>
        </authorList>
    </citation>
    <scope>PHOSPHORYLATION [LARGE SCALE ANALYSIS] AT SER-390; SER-391 AND SER-392</scope>
    <scope>IDENTIFICATION BY MASS SPECTROMETRY [LARGE SCALE ANALYSIS]</scope>
</reference>
<reference key="14">
    <citation type="journal article" date="2012" name="Nat. Genet.">
        <title>Mutations in UVSSA cause UV-sensitive syndrome and destabilize ERCC6 in transcription-coupled DNA repair.</title>
        <authorList>
            <person name="Zhang X."/>
            <person name="Horibata K."/>
            <person name="Saijo M."/>
            <person name="Ishigami C."/>
            <person name="Ukai A."/>
            <person name="Kanno S.I."/>
            <person name="Tahara H."/>
            <person name="Neilan E.G."/>
            <person name="Honma M."/>
            <person name="Nohmi T."/>
            <person name="Yasui A."/>
            <person name="Tanaka K."/>
        </authorList>
    </citation>
    <scope>INTERACTION WITH UVSSA</scope>
</reference>
<reference key="15">
    <citation type="journal article" date="2016" name="J. Biol. Chem.">
        <title>The C-terminal Region and SUMOylation of Cockayne Syndrome Group B Protein Play Critical Roles in Transcription-coupled Nucleotide Excision Repair.</title>
        <authorList>
            <person name="Sin Y."/>
            <person name="Tanaka K."/>
            <person name="Saijo M."/>
        </authorList>
    </citation>
    <scope>SUBCELLULAR LOCATION</scope>
</reference>
<reference key="16">
    <citation type="journal article" date="2018" name="Oncotarget">
        <title>CSA and CSB play a role in the response to DNA breaks.</title>
        <authorList>
            <person name="Pascucci B."/>
            <person name="Fragale A."/>
            <person name="Marabitti V."/>
            <person name="Leuzzi G."/>
            <person name="Calcagnile A.S."/>
            <person name="Parlanti E."/>
            <person name="Franchitto A."/>
            <person name="Dogliotti E."/>
            <person name="D'Errico M."/>
        </authorList>
    </citation>
    <scope>FUNCTION</scope>
</reference>
<reference key="17">
    <citation type="journal article" date="2020" name="Cell">
        <title>Ubiquitination of DNA Damage-Stalled RNAPII Promotes Transcription-Coupled Repair.</title>
        <authorList>
            <person name="Nakazawa Y."/>
            <person name="Hara Y."/>
            <person name="Oka Y."/>
            <person name="Komine O."/>
            <person name="van den Heuvel D."/>
            <person name="Guo C."/>
            <person name="Daigaku Y."/>
            <person name="Isono M."/>
            <person name="He Y."/>
            <person name="Shimada M."/>
            <person name="Kato K."/>
            <person name="Jia N."/>
            <person name="Hashimoto S."/>
            <person name="Kotani Y."/>
            <person name="Miyoshi Y."/>
            <person name="Tanaka M."/>
            <person name="Sobue A."/>
            <person name="Mitsutake N."/>
            <person name="Suganami T."/>
            <person name="Masuda A."/>
            <person name="Ohno K."/>
            <person name="Nakada S."/>
            <person name="Mashimo T."/>
            <person name="Yamanaka K."/>
            <person name="Luijsterburg M.S."/>
            <person name="Ogi T."/>
        </authorList>
    </citation>
    <scope>FUNCTION</scope>
</reference>
<reference key="18">
    <citation type="journal article" date="2020" name="Nat. Commun.">
        <title>The cooperative action of CSB, CSA, and UVSSA target TFIIH to DNA damage-stalled RNA polymerase II.</title>
        <authorList>
            <person name="van der Weegen Y."/>
            <person name="Golan-Berman H."/>
            <person name="Mevissen T.E.T."/>
            <person name="Apelt K."/>
            <person name="Gonzalez-Prieto R."/>
            <person name="Goedhart J."/>
            <person name="Heilbrun E.E."/>
            <person name="Vertegaal A.C.O."/>
            <person name="van den Heuvel D."/>
            <person name="Walter J.C."/>
            <person name="Adar S."/>
            <person name="Luijsterburg M.S."/>
        </authorList>
    </citation>
    <scope>FUNCTION</scope>
    <scope>SUBUNIT</scope>
    <scope>SUBCELLULAR LOCATION</scope>
    <scope>INTERACTION WITH ERCC6</scope>
</reference>
<reference key="19">
    <citation type="journal article" date="2024" name="Nat. Cell Biol.">
        <title>Transcription-coupled DNA-protein crosslink repair by CSB and CRL4CSA-mediated degradation.</title>
        <authorList>
            <person name="van Sluis M."/>
            <person name="Yu Q."/>
            <person name="van der Woude M."/>
            <person name="Gonzalo-Hansen C."/>
            <person name="Dealy S.C."/>
            <person name="Janssens R.C."/>
            <person name="Somsen H.B."/>
            <person name="Ramadhin A.R."/>
            <person name="Dekkers D.H.W."/>
            <person name="Wienecke H.L."/>
            <person name="Demmers J.J.P.G."/>
            <person name="Raams A."/>
            <person name="Davo-Martinez C."/>
            <person name="Llerena Schiffmacher D.A."/>
            <person name="van Toorn M."/>
            <person name="Haeckes D."/>
            <person name="Thijssen K.L."/>
            <person name="Zhou D."/>
            <person name="Lammers J.G."/>
            <person name="Pines A."/>
            <person name="Vermeulen W."/>
            <person name="Pothof J."/>
            <person name="Demmers J.A.A."/>
            <person name="van den Berg D.L.C."/>
            <person name="Lans H."/>
            <person name="Marteijn J.A."/>
        </authorList>
    </citation>
    <scope>FUNCTION</scope>
</reference>
<reference key="20">
    <citation type="journal article" date="2024" name="Nat. Cell Biol.">
        <title>Transcription-coupled repair of DNA-protein cross-links depends on CSA and CSB.</title>
        <authorList>
            <person name="Carnie C.J."/>
            <person name="Acampora A.C."/>
            <person name="Bader A.S."/>
            <person name="Erdenebat C."/>
            <person name="Zhao S."/>
            <person name="Bitensky E."/>
            <person name="van den Heuvel D."/>
            <person name="Parnas A."/>
            <person name="Gupta V."/>
            <person name="D'Alessandro G."/>
            <person name="Sczaniecka-Clift M."/>
            <person name="Weickert P."/>
            <person name="Aygenli F."/>
            <person name="Goetz M.J."/>
            <person name="Cordes J."/>
            <person name="Esain-Garcia I."/>
            <person name="Melidis L."/>
            <person name="Wondergem A.P."/>
            <person name="Lam S."/>
            <person name="Robles M.S."/>
            <person name="Balasubramanian S."/>
            <person name="Adar S."/>
            <person name="Luijsterburg M.S."/>
            <person name="Jackson S.P."/>
            <person name="Stingele J."/>
        </authorList>
    </citation>
    <scope>FUNCTION</scope>
</reference>
<reference key="21">
    <citation type="journal article" date="2011" name="Cell">
        <title>The molecular basis of CRL4DDB2/CSA ubiquitin ligase architecture, targeting, and activation.</title>
        <authorList>
            <person name="Fischer E.S."/>
            <person name="Scrima A."/>
            <person name="Bohm K."/>
            <person name="Matsumoto S."/>
            <person name="Lingaraju G.M."/>
            <person name="Faty M."/>
            <person name="Yasuda T."/>
            <person name="Cavadini S."/>
            <person name="Wakasugi M."/>
            <person name="Hanaoka F."/>
            <person name="Iwai S."/>
            <person name="Gut H."/>
            <person name="Sugasawa K."/>
            <person name="Thoma N.H."/>
        </authorList>
    </citation>
    <scope>X-RAY CRYSTALLOGRAPHY (3.31 ANGSTROMS) IN COMPLEX WITH DDB1</scope>
    <scope>SUBUNIT</scope>
</reference>
<reference evidence="29 30 31 32 33" key="22">
    <citation type="journal article" date="2021" name="Nature">
        <title>Structural basis of human transcription-DNA repair coupling.</title>
        <authorList>
            <person name="Kokic G."/>
            <person name="Wagner F.R."/>
            <person name="Chernev A."/>
            <person name="Urlaub H."/>
            <person name="Cramer P."/>
        </authorList>
    </citation>
    <scope>STRUCTURE BY ELECTRON MICROSCOPY (2.70 ANGSTROMS) IN COMPLEX WITH UVSSA; DDB1; ERCC6 AND RNA POLYMERASE II</scope>
    <scope>FUNCTION</scope>
    <scope>PATHWAY</scope>
    <scope>SUBUNIT</scope>
</reference>
<reference evidence="34 35 36" key="23">
    <citation type="journal article" date="2024" name="Nat. Struct. Mol. Biol.">
        <title>Structural basis for RNA polymerase II ubiquitylation and inactivation in transcription-coupled repair.</title>
        <authorList>
            <person name="Kokic G."/>
            <person name="Yakoub G."/>
            <person name="van den Heuvel D."/>
            <person name="Wondergem A.P."/>
            <person name="van der Meer P.J."/>
            <person name="van der Weegen Y."/>
            <person name="Chernev A."/>
            <person name="Fianu I."/>
            <person name="Fokkens T.J."/>
            <person name="Lorenz S."/>
            <person name="Urlaub H."/>
            <person name="Cramer P."/>
            <person name="Luijsterburg M.S."/>
        </authorList>
    </citation>
    <scope>STRUCTURE BY ELECTRON MICROSCOPY (2.60 ANGSTROMS) IN COMPLEX WITH ELOF1; UVSSA; DDB1; ERCC6; CUL4A; RBX1; DDB1 AND RNA POLYMERASE II</scope>
    <scope>FUNCTION</scope>
    <scope>SUBUNIT</scope>
    <scope>MUTAGENESIS OF TYR-334</scope>
</reference>
<reference key="24">
    <citation type="journal article" date="2004" name="J. Hum. Genet.">
        <title>CKN1 (MIM 216400): mutations in Cockayne syndrome type A and a new common polymorphism.</title>
        <authorList>
            <person name="Cao H."/>
            <person name="Williams C."/>
            <person name="Carter M."/>
            <person name="Hegele R.A."/>
        </authorList>
    </citation>
    <scope>VARIANT CSA PRO-205</scope>
</reference>
<reference key="25">
    <citation type="journal article" date="2005" name="J. Hum. Genet.">
        <title>Characterisation of novel mutations in Cockayne syndrome type A and xeroderma pigmentosum group C subjects.</title>
        <authorList>
            <person name="Ridley A.J."/>
            <person name="Colley J."/>
            <person name="Wynford-Thomas D."/>
            <person name="Jones C.J."/>
        </authorList>
    </citation>
    <scope>VARIANT CSA VAL-160</scope>
</reference>
<reference key="26">
    <citation type="journal article" date="2009" name="Proc. Natl. Acad. Sci. U.S.A.">
        <title>A UV-sensitive syndrome patient with a specific CSA mutation reveals separable roles for CSA in response to UV and oxidative DNA damage.</title>
        <authorList>
            <person name="Nardo T."/>
            <person name="Oneda R."/>
            <person name="Spivak G."/>
            <person name="Vaz B."/>
            <person name="Mortier L."/>
            <person name="Thomas P."/>
            <person name="Orioli D."/>
            <person name="Laugel V."/>
            <person name="Stary A."/>
            <person name="Hanawalt P.C."/>
            <person name="Sarasin A."/>
            <person name="Stefanini M."/>
        </authorList>
    </citation>
    <scope>VARIANT UVSS2 CYS-361</scope>
</reference>
<reference key="27">
    <citation type="journal article" date="2010" name="Am. J. Med. Genet. A">
        <title>High carriers frequency of an apparently ancient founder mutation p.Tyr322X in the ERCC8 gene responsible for Cockayne syndrome among Christian Arabs in Northern Israel.</title>
        <authorList>
            <person name="Khayat M."/>
            <person name="Hardouf H."/>
            <person name="Zlotogora J."/>
            <person name="Shalev S.A."/>
        </authorList>
    </citation>
    <scope>VARIANT CSA 322-TYR--GLY-396 DEL</scope>
</reference>
<reference key="28">
    <citation type="journal article" date="2010" name="Hum. Mutat.">
        <title>Mutation update for the CSB/ERCC6 and CSA/ERCC8 genes involved in Cockayne syndrome.</title>
        <authorList>
            <person name="Laugel V."/>
            <person name="Dalloz C."/>
            <person name="Durand M."/>
            <person name="Sauvanaud F."/>
            <person name="Kristensen U."/>
            <person name="Vincent M.C."/>
            <person name="Pasquier L."/>
            <person name="Odent S."/>
            <person name="Cormier-Daire V."/>
            <person name="Gener B."/>
            <person name="Tobias E.S."/>
            <person name="Tolmie J.L."/>
            <person name="Martin-Coignard D."/>
            <person name="Drouin-Garraud V."/>
            <person name="Heron D."/>
            <person name="Journel H."/>
            <person name="Raffo E."/>
            <person name="Vigneron J."/>
            <person name="Lyonnet S."/>
            <person name="Murday V."/>
            <person name="Gubser-Mercati D."/>
            <person name="Funalot B."/>
            <person name="Brueton L."/>
            <person name="Sanchez Del Pozo J."/>
            <person name="Munoz E."/>
            <person name="Gennery A.R."/>
            <person name="Salih M."/>
            <person name="Noruzinia M."/>
            <person name="Prescott K."/>
            <person name="Ramos L."/>
            <person name="Stark Z."/>
            <person name="Fieggen K."/>
            <person name="Chabrol B."/>
            <person name="Sarda P."/>
            <person name="Edery P."/>
            <person name="Bloch-Zupan A."/>
            <person name="Fawcett H."/>
            <person name="Pham D."/>
            <person name="Egly J.M."/>
            <person name="Lehmann A.R."/>
            <person name="Sarasin A."/>
            <person name="Dollfus H."/>
        </authorList>
    </citation>
    <scope>VARIANTS CSA THR-160; CYS-194; SER-202 AND GLY-266</scope>
</reference>
<accession>Q13216</accession>
<accession>B2RB64</accession>
<accession>Q6FHX5</accession>
<accession>Q96GB9</accession>
<proteinExistence type="evidence at protein level"/>
<feature type="chain" id="PRO_0000050970" description="DNA excision repair protein ERCC-8">
    <location>
        <begin position="1"/>
        <end position="396"/>
    </location>
</feature>
<feature type="repeat" description="WD 1">
    <location>
        <begin position="33"/>
        <end position="73"/>
    </location>
</feature>
<feature type="repeat" description="WD 2">
    <location>
        <begin position="88"/>
        <end position="129"/>
    </location>
</feature>
<feature type="repeat" description="WD 3">
    <location>
        <begin position="133"/>
        <end position="173"/>
    </location>
</feature>
<feature type="repeat" description="WD 4">
    <location>
        <begin position="177"/>
        <end position="216"/>
    </location>
</feature>
<feature type="repeat" description="WD 5">
    <location>
        <begin position="235"/>
        <end position="274"/>
    </location>
</feature>
<feature type="repeat" description="WD 6">
    <location>
        <begin position="281"/>
        <end position="321"/>
    </location>
</feature>
<feature type="repeat" description="WD 7">
    <location>
        <begin position="325"/>
        <end position="363"/>
    </location>
</feature>
<feature type="region of interest" description="Disordered" evidence="1">
    <location>
        <begin position="371"/>
        <end position="396"/>
    </location>
</feature>
<feature type="modified residue" description="Phosphoserine" evidence="37">
    <location>
        <position position="390"/>
    </location>
</feature>
<feature type="modified residue" description="Phosphoserine" evidence="37">
    <location>
        <position position="391"/>
    </location>
</feature>
<feature type="modified residue" description="Phosphoserine" evidence="37">
    <location>
        <position position="392"/>
    </location>
</feature>
<feature type="splice variant" id="VSP_013914" description="In isoform 2." evidence="23">
    <original>HRQEILAVSWSPRYDYILATA</original>
    <variation>IFILFQTATTLSKRFNKKKRY</variation>
    <location>
        <begin position="185"/>
        <end position="205"/>
    </location>
</feature>
<feature type="splice variant" id="VSP_013915" description="In isoform 2." evidence="23">
    <location>
        <begin position="206"/>
        <end position="396"/>
    </location>
</feature>
<feature type="sequence variant" id="VAR_053392" description="In dbSNP:rs167037.">
    <original>S</original>
    <variation>C</variation>
    <location>
        <position position="150"/>
    </location>
</feature>
<feature type="sequence variant" id="VAR_063507" description="In CSA; dbSNP:rs281875222." evidence="8">
    <original>A</original>
    <variation>T</variation>
    <location>
        <position position="160"/>
    </location>
</feature>
<feature type="sequence variant" id="VAR_025380" description="In CSA; dbSNP:rs121434325." evidence="4">
    <original>A</original>
    <variation>V</variation>
    <location>
        <position position="160"/>
    </location>
</feature>
<feature type="sequence variant" id="VAR_063508" description="In CSA; dbSNP:rs281875223." evidence="8">
    <original>W</original>
    <variation>C</variation>
    <location>
        <position position="194"/>
    </location>
</feature>
<feature type="sequence variant" id="VAR_016319" description="In dbSNP:rs4647105." evidence="21">
    <original>Y</original>
    <variation>C</variation>
    <location>
        <position position="200"/>
    </location>
</feature>
<feature type="sequence variant" id="VAR_063509" description="In CSA; dbSNP:rs281875224." evidence="8">
    <original>L</original>
    <variation>S</variation>
    <location>
        <position position="202"/>
    </location>
</feature>
<feature type="sequence variant" id="VAR_025381" description="In CSA; dbSNP:rs121434326." evidence="3">
    <original>A</original>
    <variation>P</variation>
    <location>
        <position position="205"/>
    </location>
</feature>
<feature type="sequence variant" id="VAR_063510" description="In CSA; dbSNP:rs281875225." evidence="8">
    <original>D</original>
    <variation>G</variation>
    <location>
        <position position="266"/>
    </location>
</feature>
<feature type="sequence variant" id="VAR_090257" description="In CSA." evidence="9">
    <location>
        <begin position="322"/>
        <end position="396"/>
    </location>
</feature>
<feature type="sequence variant" id="VAR_068177" description="In UVSS2; dbSNP:rs281875221." evidence="7">
    <original>W</original>
    <variation>C</variation>
    <location>
        <position position="361"/>
    </location>
</feature>
<feature type="mutagenesis site" description="Defects in transcription-coupled nucleotide excision repair (TC-NER)." evidence="17">
    <original>Y</original>
    <variation>A</variation>
    <location>
        <position position="334"/>
    </location>
</feature>
<feature type="helix" evidence="41">
    <location>
        <begin position="2"/>
        <end position="9"/>
    </location>
</feature>
<feature type="strand" evidence="42">
    <location>
        <begin position="11"/>
        <end position="13"/>
    </location>
</feature>
<feature type="helix" evidence="41">
    <location>
        <begin position="15"/>
        <end position="27"/>
    </location>
</feature>
<feature type="strand" evidence="41">
    <location>
        <begin position="30"/>
        <end position="32"/>
    </location>
</feature>
<feature type="strand" evidence="41">
    <location>
        <begin position="34"/>
        <end position="38"/>
    </location>
</feature>
<feature type="strand" evidence="41">
    <location>
        <begin position="46"/>
        <end position="51"/>
    </location>
</feature>
<feature type="turn" evidence="41">
    <location>
        <begin position="53"/>
        <end position="55"/>
    </location>
</feature>
<feature type="strand" evidence="41">
    <location>
        <begin position="58"/>
        <end position="63"/>
    </location>
</feature>
<feature type="strand" evidence="41">
    <location>
        <begin position="68"/>
        <end position="72"/>
    </location>
</feature>
<feature type="strand" evidence="41">
    <location>
        <begin position="77"/>
        <end position="84"/>
    </location>
</feature>
<feature type="strand" evidence="41">
    <location>
        <begin position="86"/>
        <end position="90"/>
    </location>
</feature>
<feature type="strand" evidence="41">
    <location>
        <begin position="102"/>
        <end position="107"/>
    </location>
</feature>
<feature type="strand" evidence="41">
    <location>
        <begin position="109"/>
        <end position="111"/>
    </location>
</feature>
<feature type="strand" evidence="41">
    <location>
        <begin position="114"/>
        <end position="119"/>
    </location>
</feature>
<feature type="strand" evidence="41">
    <location>
        <begin position="122"/>
        <end position="128"/>
    </location>
</feature>
<feature type="turn" evidence="41">
    <location>
        <begin position="129"/>
        <end position="131"/>
    </location>
</feature>
<feature type="strand" evidence="41">
    <location>
        <begin position="134"/>
        <end position="139"/>
    </location>
</feature>
<feature type="strand" evidence="41">
    <location>
        <begin position="144"/>
        <end position="149"/>
    </location>
</feature>
<feature type="strand" evidence="41">
    <location>
        <begin position="158"/>
        <end position="172"/>
    </location>
</feature>
<feature type="turn" evidence="41">
    <location>
        <begin position="173"/>
        <end position="175"/>
    </location>
</feature>
<feature type="strand" evidence="41">
    <location>
        <begin position="180"/>
        <end position="182"/>
    </location>
</feature>
<feature type="strand" evidence="41">
    <location>
        <begin position="189"/>
        <end position="194"/>
    </location>
</feature>
<feature type="strand" evidence="40">
    <location>
        <begin position="196"/>
        <end position="198"/>
    </location>
</feature>
<feature type="strand" evidence="41">
    <location>
        <begin position="201"/>
        <end position="206"/>
    </location>
</feature>
<feature type="strand" evidence="41">
    <location>
        <begin position="211"/>
        <end position="215"/>
    </location>
</feature>
<feature type="strand" evidence="38">
    <location>
        <begin position="219"/>
        <end position="221"/>
    </location>
</feature>
<feature type="strand" evidence="41">
    <location>
        <begin position="223"/>
        <end position="225"/>
    </location>
</feature>
<feature type="strand" evidence="39">
    <location>
        <begin position="227"/>
        <end position="233"/>
    </location>
</feature>
<feature type="strand" evidence="41">
    <location>
        <begin position="238"/>
        <end position="240"/>
    </location>
</feature>
<feature type="strand" evidence="40">
    <location>
        <begin position="243"/>
        <end position="246"/>
    </location>
</feature>
<feature type="strand" evidence="41">
    <location>
        <begin position="248"/>
        <end position="253"/>
    </location>
</feature>
<feature type="strand" evidence="41">
    <location>
        <begin position="257"/>
        <end position="264"/>
    </location>
</feature>
<feature type="turn" evidence="41">
    <location>
        <begin position="265"/>
        <end position="267"/>
    </location>
</feature>
<feature type="strand" evidence="41">
    <location>
        <begin position="268"/>
        <end position="273"/>
    </location>
</feature>
<feature type="turn" evidence="41">
    <location>
        <begin position="274"/>
        <end position="276"/>
    </location>
</feature>
<feature type="strand" evidence="41">
    <location>
        <begin position="302"/>
        <end position="305"/>
    </location>
</feature>
<feature type="strand" evidence="41">
    <location>
        <begin position="307"/>
        <end position="312"/>
    </location>
</feature>
<feature type="strand" evidence="41">
    <location>
        <begin position="315"/>
        <end position="320"/>
    </location>
</feature>
<feature type="turn" evidence="41">
    <location>
        <begin position="321"/>
        <end position="323"/>
    </location>
</feature>
<feature type="strand" evidence="41">
    <location>
        <begin position="326"/>
        <end position="330"/>
    </location>
</feature>
<feature type="strand" evidence="41">
    <location>
        <begin position="337"/>
        <end position="343"/>
    </location>
</feature>
<feature type="turn" evidence="41">
    <location>
        <begin position="344"/>
        <end position="347"/>
    </location>
</feature>
<feature type="strand" evidence="41">
    <location>
        <begin position="348"/>
        <end position="353"/>
    </location>
</feature>
<feature type="strand" evidence="41">
    <location>
        <begin position="358"/>
        <end position="363"/>
    </location>
</feature>
<feature type="helix" evidence="41">
    <location>
        <begin position="383"/>
        <end position="385"/>
    </location>
</feature>
<evidence type="ECO:0000256" key="1">
    <source>
        <dbReference type="SAM" id="MobiDB-lite"/>
    </source>
</evidence>
<evidence type="ECO:0000269" key="2">
    <source>
    </source>
</evidence>
<evidence type="ECO:0000269" key="3">
    <source>
    </source>
</evidence>
<evidence type="ECO:0000269" key="4">
    <source>
    </source>
</evidence>
<evidence type="ECO:0000269" key="5">
    <source>
    </source>
</evidence>
<evidence type="ECO:0000269" key="6">
    <source>
    </source>
</evidence>
<evidence type="ECO:0000269" key="7">
    <source>
    </source>
</evidence>
<evidence type="ECO:0000269" key="8">
    <source>
    </source>
</evidence>
<evidence type="ECO:0000269" key="9">
    <source>
    </source>
</evidence>
<evidence type="ECO:0000269" key="10">
    <source>
    </source>
</evidence>
<evidence type="ECO:0000269" key="11">
    <source>
    </source>
</evidence>
<evidence type="ECO:0000269" key="12">
    <source>
    </source>
</evidence>
<evidence type="ECO:0000269" key="13">
    <source>
    </source>
</evidence>
<evidence type="ECO:0000269" key="14">
    <source>
    </source>
</evidence>
<evidence type="ECO:0000269" key="15">
    <source>
    </source>
</evidence>
<evidence type="ECO:0000269" key="16">
    <source>
    </source>
</evidence>
<evidence type="ECO:0000269" key="17">
    <source>
    </source>
</evidence>
<evidence type="ECO:0000269" key="18">
    <source>
    </source>
</evidence>
<evidence type="ECO:0000269" key="19">
    <source>
    </source>
</evidence>
<evidence type="ECO:0000269" key="20">
    <source>
    </source>
</evidence>
<evidence type="ECO:0000269" key="21">
    <source ref="4"/>
</evidence>
<evidence type="ECO:0000303" key="22">
    <source>
    </source>
</evidence>
<evidence type="ECO:0000303" key="23">
    <source>
    </source>
</evidence>
<evidence type="ECO:0000303" key="24">
    <source>
    </source>
</evidence>
<evidence type="ECO:0000303" key="25">
    <source>
    </source>
</evidence>
<evidence type="ECO:0000305" key="26"/>
<evidence type="ECO:0000305" key="27">
    <source>
    </source>
</evidence>
<evidence type="ECO:0000312" key="28">
    <source>
        <dbReference type="HGNC" id="HGNC:3439"/>
    </source>
</evidence>
<evidence type="ECO:0007744" key="29">
    <source>
        <dbReference type="PDB" id="7OO3"/>
    </source>
</evidence>
<evidence type="ECO:0007744" key="30">
    <source>
        <dbReference type="PDB" id="7OOB"/>
    </source>
</evidence>
<evidence type="ECO:0007744" key="31">
    <source>
        <dbReference type="PDB" id="7OOP"/>
    </source>
</evidence>
<evidence type="ECO:0007744" key="32">
    <source>
        <dbReference type="PDB" id="7OPC"/>
    </source>
</evidence>
<evidence type="ECO:0007744" key="33">
    <source>
        <dbReference type="PDB" id="7OPD"/>
    </source>
</evidence>
<evidence type="ECO:0007744" key="34">
    <source>
        <dbReference type="PDB" id="8B3D"/>
    </source>
</evidence>
<evidence type="ECO:0007744" key="35">
    <source>
        <dbReference type="PDB" id="8B3G"/>
    </source>
</evidence>
<evidence type="ECO:0007744" key="36">
    <source>
        <dbReference type="PDB" id="8B3I"/>
    </source>
</evidence>
<evidence type="ECO:0007744" key="37">
    <source>
    </source>
</evidence>
<evidence type="ECO:0007829" key="38">
    <source>
        <dbReference type="PDB" id="7OO3"/>
    </source>
</evidence>
<evidence type="ECO:0007829" key="39">
    <source>
        <dbReference type="PDB" id="7OOB"/>
    </source>
</evidence>
<evidence type="ECO:0007829" key="40">
    <source>
        <dbReference type="PDB" id="8B3D"/>
    </source>
</evidence>
<evidence type="ECO:0007829" key="41">
    <source>
        <dbReference type="PDB" id="9BZ0"/>
    </source>
</evidence>
<evidence type="ECO:0007829" key="42">
    <source>
        <dbReference type="PDB" id="9FD2"/>
    </source>
</evidence>
<name>ERCC8_HUMAN</name>
<organism>
    <name type="scientific">Homo sapiens</name>
    <name type="common">Human</name>
    <dbReference type="NCBI Taxonomy" id="9606"/>
    <lineage>
        <taxon>Eukaryota</taxon>
        <taxon>Metazoa</taxon>
        <taxon>Chordata</taxon>
        <taxon>Craniata</taxon>
        <taxon>Vertebrata</taxon>
        <taxon>Euteleostomi</taxon>
        <taxon>Mammalia</taxon>
        <taxon>Eutheria</taxon>
        <taxon>Euarchontoglires</taxon>
        <taxon>Primates</taxon>
        <taxon>Haplorrhini</taxon>
        <taxon>Catarrhini</taxon>
        <taxon>Hominidae</taxon>
        <taxon>Homo</taxon>
    </lineage>
</organism>
<dbReference type="EMBL" id="U28413">
    <property type="protein sequence ID" value="AAA82605.1"/>
    <property type="molecule type" value="mRNA"/>
</dbReference>
<dbReference type="EMBL" id="CR536563">
    <property type="protein sequence ID" value="CAG38800.1"/>
    <property type="molecule type" value="mRNA"/>
</dbReference>
<dbReference type="EMBL" id="BT020021">
    <property type="protein sequence ID" value="AAV38824.1"/>
    <property type="molecule type" value="mRNA"/>
</dbReference>
<dbReference type="EMBL" id="AY213194">
    <property type="protein sequence ID" value="AAO21128.1"/>
    <property type="molecule type" value="Genomic_DNA"/>
</dbReference>
<dbReference type="EMBL" id="AK314511">
    <property type="protein sequence ID" value="BAG37111.1"/>
    <property type="molecule type" value="mRNA"/>
</dbReference>
<dbReference type="EMBL" id="CH471123">
    <property type="protein sequence ID" value="EAW55004.1"/>
    <property type="molecule type" value="Genomic_DNA"/>
</dbReference>
<dbReference type="EMBL" id="BC009793">
    <property type="protein sequence ID" value="AAH09793.1"/>
    <property type="molecule type" value="mRNA"/>
</dbReference>
<dbReference type="CCDS" id="CCDS3978.1">
    <molecule id="Q13216-1"/>
</dbReference>
<dbReference type="CCDS" id="CCDS93715.1">
    <molecule id="Q13216-2"/>
</dbReference>
<dbReference type="PIR" id="A57090">
    <property type="entry name" value="A57090"/>
</dbReference>
<dbReference type="RefSeq" id="NP_000073.1">
    <molecule id="Q13216-1"/>
    <property type="nucleotide sequence ID" value="NM_000082.4"/>
</dbReference>
<dbReference type="RefSeq" id="NP_001007235.1">
    <molecule id="Q13216-2"/>
    <property type="nucleotide sequence ID" value="NM_001007234.3"/>
</dbReference>
<dbReference type="PDB" id="4A11">
    <property type="method" value="X-ray"/>
    <property type="resolution" value="3.31 A"/>
    <property type="chains" value="B=1-396"/>
</dbReference>
<dbReference type="PDB" id="6FCV">
    <property type="method" value="X-ray"/>
    <property type="resolution" value="2.92 A"/>
    <property type="chains" value="B=1-396"/>
</dbReference>
<dbReference type="PDB" id="7OO3">
    <property type="method" value="EM"/>
    <property type="resolution" value="2.80 A"/>
    <property type="chains" value="a=1-396"/>
</dbReference>
<dbReference type="PDB" id="7OOB">
    <property type="method" value="EM"/>
    <property type="resolution" value="2.70 A"/>
    <property type="chains" value="a=1-396"/>
</dbReference>
<dbReference type="PDB" id="7OOP">
    <property type="method" value="EM"/>
    <property type="resolution" value="2.90 A"/>
    <property type="chains" value="a=1-396"/>
</dbReference>
<dbReference type="PDB" id="7OPC">
    <property type="method" value="EM"/>
    <property type="resolution" value="3.00 A"/>
    <property type="chains" value="a=1-396"/>
</dbReference>
<dbReference type="PDB" id="7OPD">
    <property type="method" value="EM"/>
    <property type="resolution" value="3.00 A"/>
    <property type="chains" value="a=1-396"/>
</dbReference>
<dbReference type="PDB" id="8B3D">
    <property type="method" value="EM"/>
    <property type="resolution" value="2.60 A"/>
    <property type="chains" value="a=1-396"/>
</dbReference>
<dbReference type="PDB" id="8B3F">
    <property type="method" value="EM"/>
    <property type="resolution" value="3.10 A"/>
    <property type="chains" value="a=1-396"/>
</dbReference>
<dbReference type="PDB" id="8B3G">
    <property type="method" value="EM"/>
    <property type="resolution" value="4.40 A"/>
    <property type="chains" value="a=1-396"/>
</dbReference>
<dbReference type="PDB" id="8B3I">
    <property type="method" value="EM"/>
    <property type="resolution" value="3.50 A"/>
    <property type="chains" value="a=1-396"/>
</dbReference>
<dbReference type="PDB" id="8QH5">
    <property type="method" value="EM"/>
    <property type="resolution" value="3.40 A"/>
    <property type="chains" value="A=1-396"/>
</dbReference>
<dbReference type="PDB" id="9BZ0">
    <property type="method" value="EM"/>
    <property type="resolution" value="1.90 A"/>
    <property type="chains" value="a=1-396"/>
</dbReference>
<dbReference type="PDB" id="9ER2">
    <property type="method" value="EM"/>
    <property type="resolution" value="3.30 A"/>
    <property type="chains" value="a=1-396"/>
</dbReference>
<dbReference type="PDB" id="9FD2">
    <property type="method" value="EM"/>
    <property type="resolution" value="3.40 A"/>
    <property type="chains" value="a=1-396"/>
</dbReference>
<dbReference type="PDBsum" id="4A11"/>
<dbReference type="PDBsum" id="6FCV"/>
<dbReference type="PDBsum" id="7OO3"/>
<dbReference type="PDBsum" id="7OOB"/>
<dbReference type="PDBsum" id="7OOP"/>
<dbReference type="PDBsum" id="7OPC"/>
<dbReference type="PDBsum" id="7OPD"/>
<dbReference type="PDBsum" id="8B3D"/>
<dbReference type="PDBsum" id="8B3F"/>
<dbReference type="PDBsum" id="8B3G"/>
<dbReference type="PDBsum" id="8B3I"/>
<dbReference type="PDBsum" id="8QH5"/>
<dbReference type="PDBsum" id="9BZ0"/>
<dbReference type="PDBsum" id="9ER2"/>
<dbReference type="PDBsum" id="9FD2"/>
<dbReference type="EMDB" id="EMD-13004"/>
<dbReference type="EMDB" id="EMD-13009"/>
<dbReference type="EMDB" id="EMD-13010"/>
<dbReference type="EMDB" id="EMD-13015"/>
<dbReference type="EMDB" id="EMD-13016"/>
<dbReference type="EMDB" id="EMD-15825"/>
<dbReference type="EMDB" id="EMD-15826"/>
<dbReference type="EMDB" id="EMD-15827"/>
<dbReference type="EMDB" id="EMD-15829"/>
<dbReference type="EMDB" id="EMD-18377"/>
<dbReference type="EMDB" id="EMD-18378"/>
<dbReference type="EMDB" id="EMD-18380"/>
<dbReference type="EMDB" id="EMD-18398"/>
<dbReference type="EMDB" id="EMD-18413"/>
<dbReference type="EMDB" id="EMD-19909"/>
<dbReference type="EMDB" id="EMD-45050"/>
<dbReference type="EMDB" id="EMD-50292"/>
<dbReference type="EMDB" id="EMD-50293"/>
<dbReference type="EMDB" id="EMD-50295"/>
<dbReference type="EMDB" id="EMD-50306"/>
<dbReference type="EMDB" id="EMD-50325"/>
<dbReference type="SMR" id="Q13216"/>
<dbReference type="BioGRID" id="107581">
    <property type="interactions" value="115"/>
</dbReference>
<dbReference type="ComplexPortal" id="CPX-2757">
    <property type="entry name" value="CRL4-ERCC8 E3 ubiquitin ligase complex, CUL4A variant"/>
</dbReference>
<dbReference type="ComplexPortal" id="CPX-2758">
    <property type="entry name" value="CRL4-ERCC8 E3 ubiquitin ligase complex, CUL4B variant"/>
</dbReference>
<dbReference type="CORUM" id="Q13216"/>
<dbReference type="DIP" id="DIP-291N"/>
<dbReference type="FunCoup" id="Q13216">
    <property type="interactions" value="1524"/>
</dbReference>
<dbReference type="IntAct" id="Q13216">
    <property type="interactions" value="33"/>
</dbReference>
<dbReference type="MINT" id="Q13216"/>
<dbReference type="STRING" id="9606.ENSP00000265038"/>
<dbReference type="GlyGen" id="Q13216">
    <property type="glycosylation" value="1 site, 1 O-linked glycan (1 site)"/>
</dbReference>
<dbReference type="iPTMnet" id="Q13216"/>
<dbReference type="PhosphoSitePlus" id="Q13216"/>
<dbReference type="BioMuta" id="ERCC8"/>
<dbReference type="DMDM" id="3121917"/>
<dbReference type="jPOST" id="Q13216"/>
<dbReference type="MassIVE" id="Q13216"/>
<dbReference type="PaxDb" id="9606-ENSP00000265038"/>
<dbReference type="PeptideAtlas" id="Q13216"/>
<dbReference type="ProteomicsDB" id="59228">
    <molecule id="Q13216-1"/>
</dbReference>
<dbReference type="ProteomicsDB" id="59229">
    <molecule id="Q13216-2"/>
</dbReference>
<dbReference type="Pumba" id="Q13216"/>
<dbReference type="Antibodypedia" id="11400">
    <property type="antibodies" value="350 antibodies from 26 providers"/>
</dbReference>
<dbReference type="DNASU" id="1161"/>
<dbReference type="Ensembl" id="ENST00000647486.2">
    <molecule id="Q13216-2"/>
    <property type="protein sequence ID" value="ENSP00000494466.2"/>
    <property type="gene ID" value="ENSG00000049167.16"/>
</dbReference>
<dbReference type="Ensembl" id="ENST00000675229.1">
    <molecule id="Q13216-2"/>
    <property type="protein sequence ID" value="ENSP00000502154.1"/>
    <property type="gene ID" value="ENSG00000049167.16"/>
</dbReference>
<dbReference type="Ensembl" id="ENST00000676185.1">
    <molecule id="Q13216-1"/>
    <property type="protein sequence ID" value="ENSP00000501614.1"/>
    <property type="gene ID" value="ENSG00000049167.16"/>
</dbReference>
<dbReference type="GeneID" id="1161"/>
<dbReference type="KEGG" id="hsa:1161"/>
<dbReference type="MANE-Select" id="ENST00000676185.1">
    <property type="protein sequence ID" value="ENSP00000501614.1"/>
    <property type="RefSeq nucleotide sequence ID" value="NM_000082.4"/>
    <property type="RefSeq protein sequence ID" value="NP_000073.1"/>
</dbReference>
<dbReference type="UCSC" id="uc003jsm.4">
    <molecule id="Q13216-1"/>
    <property type="organism name" value="human"/>
</dbReference>
<dbReference type="AGR" id="HGNC:3439"/>
<dbReference type="CTD" id="1161"/>
<dbReference type="DisGeNET" id="1161"/>
<dbReference type="GeneCards" id="ERCC8"/>
<dbReference type="GeneReviews" id="ERCC8"/>
<dbReference type="HGNC" id="HGNC:3439">
    <property type="gene designation" value="ERCC8"/>
</dbReference>
<dbReference type="HPA" id="ENSG00000049167">
    <property type="expression patterns" value="Low tissue specificity"/>
</dbReference>
<dbReference type="MalaCards" id="ERCC8"/>
<dbReference type="MIM" id="216400">
    <property type="type" value="phenotype"/>
</dbReference>
<dbReference type="MIM" id="609412">
    <property type="type" value="gene"/>
</dbReference>
<dbReference type="MIM" id="614621">
    <property type="type" value="phenotype"/>
</dbReference>
<dbReference type="neXtProt" id="NX_Q13216"/>
<dbReference type="OpenTargets" id="ENSG00000049167"/>
<dbReference type="Orphanet" id="90321">
    <property type="disease" value="Cockayne syndrome type 1"/>
</dbReference>
<dbReference type="Orphanet" id="90322">
    <property type="disease" value="Cockayne syndrome type 2"/>
</dbReference>
<dbReference type="Orphanet" id="90324">
    <property type="disease" value="Cockayne syndrome type 3"/>
</dbReference>
<dbReference type="Orphanet" id="178338">
    <property type="disease" value="UV-sensitive syndrome"/>
</dbReference>
<dbReference type="PharmGKB" id="PA27853"/>
<dbReference type="VEuPathDB" id="HostDB:ENSG00000049167"/>
<dbReference type="eggNOG" id="KOG4283">
    <property type="taxonomic scope" value="Eukaryota"/>
</dbReference>
<dbReference type="GeneTree" id="ENSGT00390000009065"/>
<dbReference type="HOGENOM" id="CLU_032951_2_2_1"/>
<dbReference type="InParanoid" id="Q13216"/>
<dbReference type="OMA" id="WIPAPRE"/>
<dbReference type="OrthoDB" id="361494at2759"/>
<dbReference type="PAN-GO" id="Q13216">
    <property type="GO annotations" value="5 GO annotations based on evolutionary models"/>
</dbReference>
<dbReference type="PhylomeDB" id="Q13216"/>
<dbReference type="TreeFam" id="TF101237"/>
<dbReference type="PathwayCommons" id="Q13216"/>
<dbReference type="Reactome" id="R-HSA-6781823">
    <property type="pathway name" value="Formation of TC-NER Pre-Incision Complex"/>
</dbReference>
<dbReference type="Reactome" id="R-HSA-6781827">
    <property type="pathway name" value="Transcription-Coupled Nucleotide Excision Repair (TC-NER)"/>
</dbReference>
<dbReference type="Reactome" id="R-HSA-6782135">
    <property type="pathway name" value="Dual incision in TC-NER"/>
</dbReference>
<dbReference type="Reactome" id="R-HSA-6782210">
    <property type="pathway name" value="Gap-filling DNA repair synthesis and ligation in TC-NER"/>
</dbReference>
<dbReference type="Reactome" id="R-HSA-8951664">
    <property type="pathway name" value="Neddylation"/>
</dbReference>
<dbReference type="SignaLink" id="Q13216"/>
<dbReference type="SIGNOR" id="Q13216"/>
<dbReference type="UniPathway" id="UPA00143"/>
<dbReference type="BioGRID-ORCS" id="1161">
    <property type="hits" value="29 hits in 1198 CRISPR screens"/>
</dbReference>
<dbReference type="ChiTaRS" id="ERCC8">
    <property type="organism name" value="human"/>
</dbReference>
<dbReference type="EvolutionaryTrace" id="Q13216"/>
<dbReference type="GeneWiki" id="ERCC8_(gene)"/>
<dbReference type="GenomeRNAi" id="1161"/>
<dbReference type="Pharos" id="Q13216">
    <property type="development level" value="Tbio"/>
</dbReference>
<dbReference type="PRO" id="PR:Q13216"/>
<dbReference type="Proteomes" id="UP000005640">
    <property type="component" value="Chromosome 5"/>
</dbReference>
<dbReference type="RNAct" id="Q13216">
    <property type="molecule type" value="protein"/>
</dbReference>
<dbReference type="Bgee" id="ENSG00000049167">
    <property type="expression patterns" value="Expressed in adrenal tissue and 136 other cell types or tissues"/>
</dbReference>
<dbReference type="ExpressionAtlas" id="Q13216">
    <property type="expression patterns" value="baseline and differential"/>
</dbReference>
<dbReference type="GO" id="GO:0080008">
    <property type="term" value="C:Cul4-RING E3 ubiquitin ligase complex"/>
    <property type="evidence" value="ECO:0000314"/>
    <property type="project" value="UniProtKB"/>
</dbReference>
<dbReference type="GO" id="GO:0031464">
    <property type="term" value="C:Cul4A-RING E3 ubiquitin ligase complex"/>
    <property type="evidence" value="ECO:0000314"/>
    <property type="project" value="UniProtKB"/>
</dbReference>
<dbReference type="GO" id="GO:0016363">
    <property type="term" value="C:nuclear matrix"/>
    <property type="evidence" value="ECO:0000314"/>
    <property type="project" value="UniProtKB"/>
</dbReference>
<dbReference type="GO" id="GO:0005654">
    <property type="term" value="C:nucleoplasm"/>
    <property type="evidence" value="ECO:0000304"/>
    <property type="project" value="Reactome"/>
</dbReference>
<dbReference type="GO" id="GO:0000109">
    <property type="term" value="C:nucleotide-excision repair complex"/>
    <property type="evidence" value="ECO:0000314"/>
    <property type="project" value="MGI"/>
</dbReference>
<dbReference type="GO" id="GO:0005634">
    <property type="term" value="C:nucleus"/>
    <property type="evidence" value="ECO:0000314"/>
    <property type="project" value="UniProtKB"/>
</dbReference>
<dbReference type="GO" id="GO:0043204">
    <property type="term" value="C:perikaryon"/>
    <property type="evidence" value="ECO:0007669"/>
    <property type="project" value="Ensembl"/>
</dbReference>
<dbReference type="GO" id="GO:0032991">
    <property type="term" value="C:protein-containing complex"/>
    <property type="evidence" value="ECO:0000314"/>
    <property type="project" value="UniProtKB"/>
</dbReference>
<dbReference type="GO" id="GO:0090734">
    <property type="term" value="C:site of DNA damage"/>
    <property type="evidence" value="ECO:0000314"/>
    <property type="project" value="UniProtKB"/>
</dbReference>
<dbReference type="GO" id="GO:1990756">
    <property type="term" value="F:ubiquitin-like ligase-substrate adaptor activity"/>
    <property type="evidence" value="ECO:0000314"/>
    <property type="project" value="UniProtKB"/>
</dbReference>
<dbReference type="GO" id="GO:0006974">
    <property type="term" value="P:DNA damage response"/>
    <property type="evidence" value="ECO:0000314"/>
    <property type="project" value="UniProtKB"/>
</dbReference>
<dbReference type="GO" id="GO:0097680">
    <property type="term" value="P:double-strand break repair via classical nonhomologous end joining"/>
    <property type="evidence" value="ECO:0000314"/>
    <property type="project" value="UniProtKB"/>
</dbReference>
<dbReference type="GO" id="GO:0045739">
    <property type="term" value="P:positive regulation of DNA repair"/>
    <property type="evidence" value="ECO:0000315"/>
    <property type="project" value="UniProtKB"/>
</dbReference>
<dbReference type="GO" id="GO:0043161">
    <property type="term" value="P:proteasome-mediated ubiquitin-dependent protein catabolic process"/>
    <property type="evidence" value="ECO:0000314"/>
    <property type="project" value="UniProtKB"/>
</dbReference>
<dbReference type="GO" id="GO:0051865">
    <property type="term" value="P:protein autoubiquitination"/>
    <property type="evidence" value="ECO:0000314"/>
    <property type="project" value="UniProtKB"/>
</dbReference>
<dbReference type="GO" id="GO:0000209">
    <property type="term" value="P:protein polyubiquitination"/>
    <property type="evidence" value="ECO:0000314"/>
    <property type="project" value="UniProtKB"/>
</dbReference>
<dbReference type="GO" id="GO:0090262">
    <property type="term" value="P:regulation of transcription-coupled nucleotide-excision repair"/>
    <property type="evidence" value="ECO:0000315"/>
    <property type="project" value="UniProtKB"/>
</dbReference>
<dbReference type="GO" id="GO:0010996">
    <property type="term" value="P:response to auditory stimulus"/>
    <property type="evidence" value="ECO:0007669"/>
    <property type="project" value="Ensembl"/>
</dbReference>
<dbReference type="GO" id="GO:0006979">
    <property type="term" value="P:response to oxidative stress"/>
    <property type="evidence" value="ECO:0000314"/>
    <property type="project" value="UniProtKB"/>
</dbReference>
<dbReference type="GO" id="GO:0009411">
    <property type="term" value="P:response to UV"/>
    <property type="evidence" value="ECO:0000314"/>
    <property type="project" value="UniProtKB"/>
</dbReference>
<dbReference type="GO" id="GO:0010165">
    <property type="term" value="P:response to X-ray"/>
    <property type="evidence" value="ECO:0007669"/>
    <property type="project" value="Ensembl"/>
</dbReference>
<dbReference type="GO" id="GO:0000012">
    <property type="term" value="P:single strand break repair"/>
    <property type="evidence" value="ECO:0000314"/>
    <property type="project" value="UniProtKB"/>
</dbReference>
<dbReference type="GO" id="GO:0006283">
    <property type="term" value="P:transcription-coupled nucleotide-excision repair"/>
    <property type="evidence" value="ECO:0000314"/>
    <property type="project" value="UniProtKB"/>
</dbReference>
<dbReference type="FunFam" id="2.130.10.10:FF:000130">
    <property type="entry name" value="DNA excision repair protein ERCC-8"/>
    <property type="match status" value="1"/>
</dbReference>
<dbReference type="Gene3D" id="2.130.10.10">
    <property type="entry name" value="YVTN repeat-like/Quinoprotein amine dehydrogenase"/>
    <property type="match status" value="1"/>
</dbReference>
<dbReference type="InterPro" id="IPR020472">
    <property type="entry name" value="G-protein_beta_WD-40_rep"/>
</dbReference>
<dbReference type="InterPro" id="IPR042238">
    <property type="entry name" value="Rad28/ERCC8/Ckn1/ATCSA-1"/>
</dbReference>
<dbReference type="InterPro" id="IPR015943">
    <property type="entry name" value="WD40/YVTN_repeat-like_dom_sf"/>
</dbReference>
<dbReference type="InterPro" id="IPR019775">
    <property type="entry name" value="WD40_repeat_CS"/>
</dbReference>
<dbReference type="InterPro" id="IPR036322">
    <property type="entry name" value="WD40_repeat_dom_sf"/>
</dbReference>
<dbReference type="InterPro" id="IPR001680">
    <property type="entry name" value="WD40_rpt"/>
</dbReference>
<dbReference type="PANTHER" id="PTHR46202">
    <property type="entry name" value="DNA EXCISION REPAIR PROTEIN ERCC-8"/>
    <property type="match status" value="1"/>
</dbReference>
<dbReference type="PANTHER" id="PTHR46202:SF1">
    <property type="entry name" value="DNA EXCISION REPAIR PROTEIN ERCC-8"/>
    <property type="match status" value="1"/>
</dbReference>
<dbReference type="Pfam" id="PF00400">
    <property type="entry name" value="WD40"/>
    <property type="match status" value="4"/>
</dbReference>
<dbReference type="PRINTS" id="PR00320">
    <property type="entry name" value="GPROTEINBRPT"/>
</dbReference>
<dbReference type="SMART" id="SM00320">
    <property type="entry name" value="WD40"/>
    <property type="match status" value="5"/>
</dbReference>
<dbReference type="SUPFAM" id="SSF50978">
    <property type="entry name" value="WD40 repeat-like"/>
    <property type="match status" value="1"/>
</dbReference>
<dbReference type="PROSITE" id="PS00678">
    <property type="entry name" value="WD_REPEATS_1"/>
    <property type="match status" value="2"/>
</dbReference>
<dbReference type="PROSITE" id="PS50082">
    <property type="entry name" value="WD_REPEATS_2"/>
    <property type="match status" value="5"/>
</dbReference>
<dbReference type="PROSITE" id="PS50294">
    <property type="entry name" value="WD_REPEATS_REGION"/>
    <property type="match status" value="1"/>
</dbReference>